<organism>
    <name type="scientific">Cereibacter sphaeroides (strain ATCC 17023 / DSM 158 / JCM 6121 / CCUG 31486 / LMG 2827 / NBRC 12203 / NCIMB 8253 / ATH 2.4.1.)</name>
    <name type="common">Rhodobacter sphaeroides</name>
    <dbReference type="NCBI Taxonomy" id="272943"/>
    <lineage>
        <taxon>Bacteria</taxon>
        <taxon>Pseudomonadati</taxon>
        <taxon>Pseudomonadota</taxon>
        <taxon>Alphaproteobacteria</taxon>
        <taxon>Rhodobacterales</taxon>
        <taxon>Paracoccaceae</taxon>
        <taxon>Cereibacter</taxon>
    </lineage>
</organism>
<gene>
    <name type="primary">ssb</name>
    <name type="ordered locus">RHOS4_03720</name>
    <name type="ORF">RSP_1793</name>
</gene>
<comment type="function">
    <text evidence="1">Plays an important role in DNA replication, recombination and repair. Binds to ssDNA and to an array of partner proteins to recruit them to their sites of action during DNA metabolism.</text>
</comment>
<comment type="subunit">
    <text evidence="1">Homotetramer.</text>
</comment>
<dbReference type="EMBL" id="U82280">
    <property type="protein sequence ID" value="AAD00529.1"/>
    <property type="molecule type" value="Genomic_DNA"/>
</dbReference>
<dbReference type="EMBL" id="CP000143">
    <property type="protein sequence ID" value="ABA77940.1"/>
    <property type="molecule type" value="Genomic_DNA"/>
</dbReference>
<dbReference type="RefSeq" id="WP_011336990.1">
    <property type="nucleotide sequence ID" value="NC_007493.2"/>
</dbReference>
<dbReference type="RefSeq" id="YP_351841.1">
    <property type="nucleotide sequence ID" value="NC_007493.2"/>
</dbReference>
<dbReference type="SMR" id="Q9ZAQ8"/>
<dbReference type="STRING" id="272943.RSP_1793"/>
<dbReference type="EnsemblBacteria" id="ABA77940">
    <property type="protein sequence ID" value="ABA77940"/>
    <property type="gene ID" value="RSP_1793"/>
</dbReference>
<dbReference type="GeneID" id="3719038"/>
<dbReference type="KEGG" id="rsp:RSP_1793"/>
<dbReference type="PATRIC" id="fig|272943.9.peg.673"/>
<dbReference type="eggNOG" id="COG0629">
    <property type="taxonomic scope" value="Bacteria"/>
</dbReference>
<dbReference type="OrthoDB" id="9809878at2"/>
<dbReference type="PhylomeDB" id="Q9ZAQ8"/>
<dbReference type="Proteomes" id="UP000002703">
    <property type="component" value="Chromosome 1"/>
</dbReference>
<dbReference type="GO" id="GO:0009295">
    <property type="term" value="C:nucleoid"/>
    <property type="evidence" value="ECO:0007669"/>
    <property type="project" value="TreeGrafter"/>
</dbReference>
<dbReference type="GO" id="GO:0003697">
    <property type="term" value="F:single-stranded DNA binding"/>
    <property type="evidence" value="ECO:0007669"/>
    <property type="project" value="UniProtKB-UniRule"/>
</dbReference>
<dbReference type="GO" id="GO:0006310">
    <property type="term" value="P:DNA recombination"/>
    <property type="evidence" value="ECO:0007669"/>
    <property type="project" value="UniProtKB-UniRule"/>
</dbReference>
<dbReference type="GO" id="GO:0006281">
    <property type="term" value="P:DNA repair"/>
    <property type="evidence" value="ECO:0007669"/>
    <property type="project" value="UniProtKB-UniRule"/>
</dbReference>
<dbReference type="GO" id="GO:0006260">
    <property type="term" value="P:DNA replication"/>
    <property type="evidence" value="ECO:0007669"/>
    <property type="project" value="UniProtKB-UniRule"/>
</dbReference>
<dbReference type="CDD" id="cd04496">
    <property type="entry name" value="SSB_OBF"/>
    <property type="match status" value="1"/>
</dbReference>
<dbReference type="Gene3D" id="2.40.50.140">
    <property type="entry name" value="Nucleic acid-binding proteins"/>
    <property type="match status" value="1"/>
</dbReference>
<dbReference type="HAMAP" id="MF_00984">
    <property type="entry name" value="SSB"/>
    <property type="match status" value="1"/>
</dbReference>
<dbReference type="InterPro" id="IPR012340">
    <property type="entry name" value="NA-bd_OB-fold"/>
</dbReference>
<dbReference type="InterPro" id="IPR000424">
    <property type="entry name" value="Primosome_PriB/ssb"/>
</dbReference>
<dbReference type="InterPro" id="IPR011344">
    <property type="entry name" value="ssDNA-bd"/>
</dbReference>
<dbReference type="NCBIfam" id="TIGR00621">
    <property type="entry name" value="ssb"/>
    <property type="match status" value="1"/>
</dbReference>
<dbReference type="PANTHER" id="PTHR10302">
    <property type="entry name" value="SINGLE-STRANDED DNA-BINDING PROTEIN"/>
    <property type="match status" value="1"/>
</dbReference>
<dbReference type="PANTHER" id="PTHR10302:SF27">
    <property type="entry name" value="SINGLE-STRANDED DNA-BINDING PROTEIN"/>
    <property type="match status" value="1"/>
</dbReference>
<dbReference type="Pfam" id="PF00436">
    <property type="entry name" value="SSB"/>
    <property type="match status" value="1"/>
</dbReference>
<dbReference type="SUPFAM" id="SSF50249">
    <property type="entry name" value="Nucleic acid-binding proteins"/>
    <property type="match status" value="1"/>
</dbReference>
<dbReference type="PROSITE" id="PS50935">
    <property type="entry name" value="SSB"/>
    <property type="match status" value="1"/>
</dbReference>
<evidence type="ECO:0000255" key="1">
    <source>
        <dbReference type="HAMAP-Rule" id="MF_00984"/>
    </source>
</evidence>
<evidence type="ECO:0000256" key="2">
    <source>
        <dbReference type="SAM" id="MobiDB-lite"/>
    </source>
</evidence>
<evidence type="ECO:0000305" key="3"/>
<feature type="chain" id="PRO_0000096087" description="Single-stranded DNA-binding protein">
    <location>
        <begin position="1"/>
        <end position="173"/>
    </location>
</feature>
<feature type="domain" description="SSB" evidence="1">
    <location>
        <begin position="5"/>
        <end position="111"/>
    </location>
</feature>
<feature type="region of interest" description="Disordered" evidence="2">
    <location>
        <begin position="113"/>
        <end position="173"/>
    </location>
</feature>
<feature type="short sequence motif" description="Important for interaction with partner proteins" evidence="1">
    <location>
        <begin position="168"/>
        <end position="173"/>
    </location>
</feature>
<feature type="compositionally biased region" description="Gly residues" evidence="2">
    <location>
        <begin position="115"/>
        <end position="131"/>
    </location>
</feature>
<feature type="compositionally biased region" description="Gly residues" evidence="2">
    <location>
        <begin position="147"/>
        <end position="162"/>
    </location>
</feature>
<feature type="sequence conflict" description="In Ref. 1; AAD00529." evidence="3" ref="1">
    <original>VIIIGNLGR</original>
    <variation>GQSSSAISAA</variation>
    <location>
        <begin position="8"/>
        <end position="16"/>
    </location>
</feature>
<feature type="sequence conflict" description="In Ref. 1; AAD00529." evidence="3" ref="1">
    <original>VRSFQNGGKVVNLR</original>
    <variation>GAQLPERRQGGDFS</variation>
    <location>
        <begin position="20"/>
        <end position="33"/>
    </location>
</feature>
<protein>
    <recommendedName>
        <fullName evidence="1">Single-stranded DNA-binding protein</fullName>
        <shortName evidence="1">SSB</shortName>
    </recommendedName>
</protein>
<proteinExistence type="inferred from homology"/>
<name>SSB_CERS4</name>
<reference key="1">
    <citation type="submission" date="1996-12" db="EMBL/GenBank/DDBJ databases">
        <authorList>
            <person name="Zeilstra-Ryalls J.H."/>
            <person name="Kaplan S."/>
        </authorList>
    </citation>
    <scope>NUCLEOTIDE SEQUENCE [GENOMIC DNA]</scope>
</reference>
<reference key="2">
    <citation type="submission" date="2005-09" db="EMBL/GenBank/DDBJ databases">
        <title>Complete sequence of chromosome 1 of Rhodobacter sphaeroides 2.4.1.</title>
        <authorList>
            <person name="Copeland A."/>
            <person name="Lucas S."/>
            <person name="Lapidus A."/>
            <person name="Barry K."/>
            <person name="Detter J.C."/>
            <person name="Glavina T."/>
            <person name="Hammon N."/>
            <person name="Israni S."/>
            <person name="Pitluck S."/>
            <person name="Richardson P."/>
            <person name="Mackenzie C."/>
            <person name="Choudhary M."/>
            <person name="Larimer F."/>
            <person name="Hauser L.J."/>
            <person name="Land M."/>
            <person name="Donohue T.J."/>
            <person name="Kaplan S."/>
        </authorList>
    </citation>
    <scope>NUCLEOTIDE SEQUENCE [LARGE SCALE GENOMIC DNA]</scope>
    <source>
        <strain>ATCC 17023 / DSM 158 / JCM 6121 / CCUG 31486 / LMG 2827 / NBRC 12203 / NCIMB 8253 / ATH 2.4.1.</strain>
    </source>
</reference>
<sequence length="173" mass="18628">MAGSVNKVIIIGNLGRDPEVRSFQNGGKVVNLRIATSEQWRDRASGERKERTEWHSVAIFDENLARVAEQYLRKGSTVYIEGQLETRKWQDQSGQDRYSTEVVLRPFRSSLTMLGGRGEGAGAGGGMGGGGYEDRGGPDNYDNYGSGPRGGASSGGAPSGGGRRNDLDDEIPF</sequence>
<keyword id="KW-0227">DNA damage</keyword>
<keyword id="KW-0233">DNA recombination</keyword>
<keyword id="KW-0234">DNA repair</keyword>
<keyword id="KW-0235">DNA replication</keyword>
<keyword id="KW-0238">DNA-binding</keyword>
<keyword id="KW-1185">Reference proteome</keyword>
<accession>Q9ZAQ8</accession>
<accession>Q3J5J4</accession>